<feature type="chain" id="PRO_1000025025" description="Galactose-1-phosphate uridylyltransferase">
    <location>
        <begin position="1"/>
        <end position="495"/>
    </location>
</feature>
<sequence>MDDKLLLDTFIKQVIEQENYTELDRNYLYNRILNLVGEGVEKLTTTKNEIIDLKNELVEYAVQHGKVGETLNEQDCLGAELMNFITPLPSKVNQDFWQTYQQKSPEEAIQNFYDLSKRNDYIKTKAIAKNIYFPVETSYGQLEITINLSKPEKDPKQIALAKKMKASGYPLCQLCMENEGYQGRINYPARANHRIIRFDLDDKQWGFQYSPYAYFNEHCIFLDTIHEPMEITKQTFNNLLGIIEQFPGYFVGSNADLPIVGGSILTHEHYQGGRHTFAMEKAPIETELKFAGYEDIQAGIVKWPMSVIRLRGNSKEDLVDLADKILKTWRGYSDEEVSVLAESNGEKHHTITPIARKRDGQLELDLVLRDNQTSEQYPDGIYHPHPDVQHIKKENIGLIEVMGLAILPPRLKGELQEVEKYLLGQENKMEEYHQVWADDIKQKYSDISQENVGTIIQQELGRVFARVLEDAGVYKHDETGRMAFKRFVEEVGIVD</sequence>
<evidence type="ECO:0000255" key="1">
    <source>
        <dbReference type="HAMAP-Rule" id="MF_00571"/>
    </source>
</evidence>
<dbReference type="EC" id="2.7.7.12" evidence="1"/>
<dbReference type="EMBL" id="CP000233">
    <property type="protein sequence ID" value="ABD99193.1"/>
    <property type="molecule type" value="Genomic_DNA"/>
</dbReference>
<dbReference type="RefSeq" id="WP_011475726.1">
    <property type="nucleotide sequence ID" value="NC_007929.1"/>
</dbReference>
<dbReference type="RefSeq" id="YP_535276.1">
    <property type="nucleotide sequence ID" value="NC_007929.1"/>
</dbReference>
<dbReference type="STRING" id="362948.LSL_0383"/>
<dbReference type="KEGG" id="lsl:LSL_0383"/>
<dbReference type="PATRIC" id="fig|362948.14.peg.460"/>
<dbReference type="HOGENOM" id="CLU_047799_0_0_9"/>
<dbReference type="OrthoDB" id="2293at2"/>
<dbReference type="UniPathway" id="UPA00214"/>
<dbReference type="Proteomes" id="UP000006559">
    <property type="component" value="Chromosome"/>
</dbReference>
<dbReference type="GO" id="GO:0005737">
    <property type="term" value="C:cytoplasm"/>
    <property type="evidence" value="ECO:0007669"/>
    <property type="project" value="UniProtKB-SubCell"/>
</dbReference>
<dbReference type="GO" id="GO:0008108">
    <property type="term" value="F:UDP-glucose:hexose-1-phosphate uridylyltransferase activity"/>
    <property type="evidence" value="ECO:0007669"/>
    <property type="project" value="UniProtKB-UniRule"/>
</dbReference>
<dbReference type="GO" id="GO:0006012">
    <property type="term" value="P:galactose metabolic process"/>
    <property type="evidence" value="ECO:0007669"/>
    <property type="project" value="UniProtKB-UniRule"/>
</dbReference>
<dbReference type="HAMAP" id="MF_00571">
    <property type="entry name" value="GalP_UDP_trans"/>
    <property type="match status" value="1"/>
</dbReference>
<dbReference type="InterPro" id="IPR000766">
    <property type="entry name" value="GalP_uridyl_Trfase_II"/>
</dbReference>
<dbReference type="InterPro" id="IPR023425">
    <property type="entry name" value="GalP_uridyl_Trfase_II_CS"/>
</dbReference>
<dbReference type="InterPro" id="IPR005850">
    <property type="entry name" value="GalP_Utransf_C"/>
</dbReference>
<dbReference type="InterPro" id="IPR005849">
    <property type="entry name" value="GalP_Utransf_N"/>
</dbReference>
<dbReference type="NCBIfam" id="TIGR01239">
    <property type="entry name" value="galT_2"/>
    <property type="match status" value="1"/>
</dbReference>
<dbReference type="NCBIfam" id="NF003629">
    <property type="entry name" value="PRK05270.1-2"/>
    <property type="match status" value="1"/>
</dbReference>
<dbReference type="NCBIfam" id="NF003631">
    <property type="entry name" value="PRK05270.1-5"/>
    <property type="match status" value="1"/>
</dbReference>
<dbReference type="NCBIfam" id="NF003633">
    <property type="entry name" value="PRK05270.2-2"/>
    <property type="match status" value="1"/>
</dbReference>
<dbReference type="PANTHER" id="PTHR39191:SF1">
    <property type="entry name" value="DUF4922 DOMAIN-CONTAINING PROTEIN"/>
    <property type="match status" value="1"/>
</dbReference>
<dbReference type="PANTHER" id="PTHR39191">
    <property type="entry name" value="GALACTOSE-1-PHOSPHATE URIDYLYLTRANSFERASE"/>
    <property type="match status" value="1"/>
</dbReference>
<dbReference type="Pfam" id="PF02744">
    <property type="entry name" value="GalP_UDP_tr_C"/>
    <property type="match status" value="1"/>
</dbReference>
<dbReference type="Pfam" id="PF01087">
    <property type="entry name" value="GalP_UDP_transf"/>
    <property type="match status" value="1"/>
</dbReference>
<dbReference type="PIRSF" id="PIRSF006005">
    <property type="entry name" value="GalT_BS"/>
    <property type="match status" value="1"/>
</dbReference>
<dbReference type="PROSITE" id="PS01163">
    <property type="entry name" value="GAL_P_UDP_TRANSF_II"/>
    <property type="match status" value="1"/>
</dbReference>
<organism>
    <name type="scientific">Ligilactobacillus salivarius (strain UCC118)</name>
    <name type="common">Lactobacillus salivarius</name>
    <dbReference type="NCBI Taxonomy" id="362948"/>
    <lineage>
        <taxon>Bacteria</taxon>
        <taxon>Bacillati</taxon>
        <taxon>Bacillota</taxon>
        <taxon>Bacilli</taxon>
        <taxon>Lactobacillales</taxon>
        <taxon>Lactobacillaceae</taxon>
        <taxon>Ligilactobacillus</taxon>
    </lineage>
</organism>
<proteinExistence type="inferred from homology"/>
<comment type="catalytic activity">
    <reaction evidence="1">
        <text>alpha-D-galactose 1-phosphate + UDP-alpha-D-glucose = alpha-D-glucose 1-phosphate + UDP-alpha-D-galactose</text>
        <dbReference type="Rhea" id="RHEA:13989"/>
        <dbReference type="ChEBI" id="CHEBI:58336"/>
        <dbReference type="ChEBI" id="CHEBI:58601"/>
        <dbReference type="ChEBI" id="CHEBI:58885"/>
        <dbReference type="ChEBI" id="CHEBI:66914"/>
        <dbReference type="EC" id="2.7.7.12"/>
    </reaction>
</comment>
<comment type="pathway">
    <text evidence="1">Carbohydrate metabolism; galactose metabolism.</text>
</comment>
<comment type="subcellular location">
    <subcellularLocation>
        <location evidence="1">Cytoplasm</location>
    </subcellularLocation>
</comment>
<comment type="similarity">
    <text evidence="1">Belongs to the galactose-1-phosphate uridylyltransferase type 2 family.</text>
</comment>
<accession>Q1WUZ2</accession>
<protein>
    <recommendedName>
        <fullName evidence="1">Galactose-1-phosphate uridylyltransferase</fullName>
        <shortName evidence="1">Gal-1-P uridylyltransferase</shortName>
        <ecNumber evidence="1">2.7.7.12</ecNumber>
    </recommendedName>
    <alternativeName>
        <fullName evidence="1">UDP-glucose--hexose-1-phosphate uridylyltransferase</fullName>
    </alternativeName>
</protein>
<name>GALT_LIGS1</name>
<keyword id="KW-0119">Carbohydrate metabolism</keyword>
<keyword id="KW-0963">Cytoplasm</keyword>
<keyword id="KW-0299">Galactose metabolism</keyword>
<keyword id="KW-0548">Nucleotidyltransferase</keyword>
<keyword id="KW-1185">Reference proteome</keyword>
<keyword id="KW-0808">Transferase</keyword>
<gene>
    <name evidence="1" type="primary">galT</name>
    <name type="ordered locus">LSL_0383</name>
</gene>
<reference key="1">
    <citation type="journal article" date="2006" name="Proc. Natl. Acad. Sci. U.S.A.">
        <title>Multireplicon genome architecture of Lactobacillus salivarius.</title>
        <authorList>
            <person name="Claesson M.J."/>
            <person name="Li Y."/>
            <person name="Leahy S."/>
            <person name="Canchaya C."/>
            <person name="van Pijkeren J.P."/>
            <person name="Cerdeno-Tarraga A.M."/>
            <person name="Parkhill J."/>
            <person name="Flynn S."/>
            <person name="O'Sullivan G.C."/>
            <person name="Collins J.K."/>
            <person name="Higgins D."/>
            <person name="Shanahan F."/>
            <person name="Fitzgerald G.F."/>
            <person name="van Sinderen D."/>
            <person name="O'Toole P.W."/>
        </authorList>
    </citation>
    <scope>NUCLEOTIDE SEQUENCE [LARGE SCALE GENOMIC DNA]</scope>
    <source>
        <strain>UCC118</strain>
    </source>
</reference>